<name>COPG2_DANRE</name>
<gene>
    <name type="primary">copg2</name>
    <name type="ORF">si:ch211-285d14.8</name>
</gene>
<evidence type="ECO:0000250" key="1"/>
<evidence type="ECO:0000256" key="2">
    <source>
        <dbReference type="SAM" id="MobiDB-lite"/>
    </source>
</evidence>
<evidence type="ECO:0000303" key="3">
    <source ref="3"/>
</evidence>
<evidence type="ECO:0000305" key="4"/>
<dbReference type="EMBL" id="AF191561">
    <property type="protein sequence ID" value="AAF05717.1"/>
    <property type="molecule type" value="mRNA"/>
</dbReference>
<dbReference type="EMBL" id="AF191562">
    <property type="protein sequence ID" value="AAF05718.1"/>
    <property type="molecule type" value="mRNA"/>
</dbReference>
<dbReference type="EMBL" id="CR749763">
    <property type="protein sequence ID" value="CAK04920.1"/>
    <property type="molecule type" value="Genomic_DNA"/>
</dbReference>
<dbReference type="EMBL" id="BX004864">
    <property type="protein sequence ID" value="CAK04920.1"/>
    <property type="status" value="JOINED"/>
    <property type="molecule type" value="Genomic_DNA"/>
</dbReference>
<dbReference type="EMBL" id="BX004864">
    <property type="protein sequence ID" value="CAK05111.1"/>
    <property type="molecule type" value="Genomic_DNA"/>
</dbReference>
<dbReference type="EMBL" id="CR749763">
    <property type="protein sequence ID" value="CAK05111.1"/>
    <property type="status" value="JOINED"/>
    <property type="molecule type" value="Genomic_DNA"/>
</dbReference>
<dbReference type="EMBL" id="BC045918">
    <property type="protein sequence ID" value="AAH45918.1"/>
    <property type="molecule type" value="mRNA"/>
</dbReference>
<dbReference type="EMBL" id="BC096860">
    <property type="protein sequence ID" value="AAH96860.1"/>
    <property type="molecule type" value="mRNA"/>
</dbReference>
<dbReference type="RefSeq" id="NP_571069.1">
    <property type="nucleotide sequence ID" value="NM_130994.1"/>
</dbReference>
<dbReference type="SMR" id="Q9PUE4"/>
<dbReference type="FunCoup" id="Q9PUE4">
    <property type="interactions" value="2758"/>
</dbReference>
<dbReference type="STRING" id="7955.ENSDARP00000043659"/>
<dbReference type="PaxDb" id="7955-ENSDARP00000043659"/>
<dbReference type="Ensembl" id="ENSDART00000043660">
    <molecule id="Q9PUE4-1"/>
    <property type="protein sequence ID" value="ENSDARP00000043659"/>
    <property type="gene ID" value="ENSDARG00000034823"/>
</dbReference>
<dbReference type="GeneID" id="30187"/>
<dbReference type="KEGG" id="dre:30187"/>
<dbReference type="AGR" id="ZFIN:ZDB-GENE-000208-8"/>
<dbReference type="CTD" id="26958"/>
<dbReference type="ZFIN" id="ZDB-GENE-000208-8">
    <property type="gene designation" value="copg2"/>
</dbReference>
<dbReference type="eggNOG" id="KOG1078">
    <property type="taxonomic scope" value="Eukaryota"/>
</dbReference>
<dbReference type="HOGENOM" id="CLU_010353_2_0_1"/>
<dbReference type="InParanoid" id="Q9PUE4"/>
<dbReference type="OMA" id="DFIEDCE"/>
<dbReference type="OrthoDB" id="1074925at2759"/>
<dbReference type="PhylomeDB" id="Q9PUE4"/>
<dbReference type="TreeFam" id="TF300324"/>
<dbReference type="Reactome" id="R-DRE-6807878">
    <property type="pathway name" value="COPI-mediated anterograde transport"/>
</dbReference>
<dbReference type="Reactome" id="R-DRE-6811434">
    <property type="pathway name" value="COPI-dependent Golgi-to-ER retrograde traffic"/>
</dbReference>
<dbReference type="PRO" id="PR:Q9PUE4"/>
<dbReference type="Proteomes" id="UP000000437">
    <property type="component" value="Chromosome 4"/>
</dbReference>
<dbReference type="Bgee" id="ENSDARG00000034823">
    <property type="expression patterns" value="Expressed in caudal fin and 36 other cell types or tissues"/>
</dbReference>
<dbReference type="GO" id="GO:0030126">
    <property type="term" value="C:COPI vesicle coat"/>
    <property type="evidence" value="ECO:0000318"/>
    <property type="project" value="GO_Central"/>
</dbReference>
<dbReference type="GO" id="GO:0005783">
    <property type="term" value="C:endoplasmic reticulum"/>
    <property type="evidence" value="ECO:0000318"/>
    <property type="project" value="GO_Central"/>
</dbReference>
<dbReference type="GO" id="GO:0005793">
    <property type="term" value="C:endoplasmic reticulum-Golgi intermediate compartment"/>
    <property type="evidence" value="ECO:0000318"/>
    <property type="project" value="GO_Central"/>
</dbReference>
<dbReference type="GO" id="GO:0000139">
    <property type="term" value="C:Golgi membrane"/>
    <property type="evidence" value="ECO:0000318"/>
    <property type="project" value="GO_Central"/>
</dbReference>
<dbReference type="GO" id="GO:0005198">
    <property type="term" value="F:structural molecule activity"/>
    <property type="evidence" value="ECO:0007669"/>
    <property type="project" value="InterPro"/>
</dbReference>
<dbReference type="GO" id="GO:0006888">
    <property type="term" value="P:endoplasmic reticulum to Golgi vesicle-mediated transport"/>
    <property type="evidence" value="ECO:0000318"/>
    <property type="project" value="GO_Central"/>
</dbReference>
<dbReference type="GO" id="GO:0006891">
    <property type="term" value="P:intra-Golgi vesicle-mediated transport"/>
    <property type="evidence" value="ECO:0000318"/>
    <property type="project" value="GO_Central"/>
</dbReference>
<dbReference type="GO" id="GO:0006886">
    <property type="term" value="P:intracellular protein transport"/>
    <property type="evidence" value="ECO:0007669"/>
    <property type="project" value="InterPro"/>
</dbReference>
<dbReference type="GO" id="GO:0072384">
    <property type="term" value="P:organelle transport along microtubule"/>
    <property type="evidence" value="ECO:0000318"/>
    <property type="project" value="GO_Central"/>
</dbReference>
<dbReference type="GO" id="GO:0009306">
    <property type="term" value="P:protein secretion"/>
    <property type="evidence" value="ECO:0000318"/>
    <property type="project" value="GO_Central"/>
</dbReference>
<dbReference type="FunFam" id="1.25.10.10:FF:000038">
    <property type="entry name" value="Coatomer subunit gamma"/>
    <property type="match status" value="1"/>
</dbReference>
<dbReference type="FunFam" id="1.25.10.10:FF:000071">
    <property type="entry name" value="Coatomer subunit gamma"/>
    <property type="match status" value="1"/>
</dbReference>
<dbReference type="FunFam" id="2.60.40.1480:FF:000001">
    <property type="entry name" value="Coatomer subunit gamma"/>
    <property type="match status" value="1"/>
</dbReference>
<dbReference type="FunFam" id="3.30.310.10:FF:000006">
    <property type="entry name" value="Coatomer subunit gamma"/>
    <property type="match status" value="1"/>
</dbReference>
<dbReference type="Gene3D" id="2.60.40.1480">
    <property type="entry name" value="Coatomer, gamma subunit, appendage domain"/>
    <property type="match status" value="1"/>
</dbReference>
<dbReference type="Gene3D" id="1.25.10.10">
    <property type="entry name" value="Leucine-rich Repeat Variant"/>
    <property type="match status" value="2"/>
</dbReference>
<dbReference type="Gene3D" id="3.30.310.10">
    <property type="entry name" value="TATA-Binding Protein"/>
    <property type="match status" value="1"/>
</dbReference>
<dbReference type="InterPro" id="IPR011989">
    <property type="entry name" value="ARM-like"/>
</dbReference>
<dbReference type="InterPro" id="IPR016024">
    <property type="entry name" value="ARM-type_fold"/>
</dbReference>
<dbReference type="InterPro" id="IPR002553">
    <property type="entry name" value="Clathrin/coatomer_adapt-like_N"/>
</dbReference>
<dbReference type="InterPro" id="IPR013041">
    <property type="entry name" value="Clathrin_app_Ig-like_sf"/>
</dbReference>
<dbReference type="InterPro" id="IPR009028">
    <property type="entry name" value="Coatomer/calthrin_app_sub_C"/>
</dbReference>
<dbReference type="InterPro" id="IPR032154">
    <property type="entry name" value="Coatomer_g_Cpla"/>
</dbReference>
<dbReference type="InterPro" id="IPR017106">
    <property type="entry name" value="Coatomer_gsu"/>
</dbReference>
<dbReference type="InterPro" id="IPR013040">
    <property type="entry name" value="Coatomer_gsu_app_Ig-like_dom"/>
</dbReference>
<dbReference type="InterPro" id="IPR037067">
    <property type="entry name" value="Coatomer_gsu_app_sf"/>
</dbReference>
<dbReference type="InterPro" id="IPR012295">
    <property type="entry name" value="TBP_dom_sf"/>
</dbReference>
<dbReference type="PANTHER" id="PTHR10261">
    <property type="entry name" value="COATOMER SUBUNIT GAMMA"/>
    <property type="match status" value="1"/>
</dbReference>
<dbReference type="PANTHER" id="PTHR10261:SF0">
    <property type="entry name" value="COATOMER SUBUNIT GAMMA-2"/>
    <property type="match status" value="1"/>
</dbReference>
<dbReference type="Pfam" id="PF01602">
    <property type="entry name" value="Adaptin_N"/>
    <property type="match status" value="1"/>
</dbReference>
<dbReference type="Pfam" id="PF16381">
    <property type="entry name" value="Coatomer_g_Cpla"/>
    <property type="match status" value="1"/>
</dbReference>
<dbReference type="Pfam" id="PF08752">
    <property type="entry name" value="COP-gamma_platf"/>
    <property type="match status" value="1"/>
</dbReference>
<dbReference type="PIRSF" id="PIRSF037093">
    <property type="entry name" value="Coatomer_gamma_subunit"/>
    <property type="match status" value="1"/>
</dbReference>
<dbReference type="SUPFAM" id="SSF48371">
    <property type="entry name" value="ARM repeat"/>
    <property type="match status" value="1"/>
</dbReference>
<dbReference type="SUPFAM" id="SSF49348">
    <property type="entry name" value="Clathrin adaptor appendage domain"/>
    <property type="match status" value="1"/>
</dbReference>
<dbReference type="SUPFAM" id="SSF55711">
    <property type="entry name" value="Subdomain of clathrin and coatomer appendage domain"/>
    <property type="match status" value="1"/>
</dbReference>
<feature type="chain" id="PRO_0000342519" description="Coatomer subunit gamma-2">
    <location>
        <begin position="1"/>
        <end position="873"/>
    </location>
</feature>
<feature type="repeat" description="HEAT 1">
    <location>
        <begin position="64"/>
        <end position="101"/>
    </location>
</feature>
<feature type="repeat" description="HEAT 2">
    <location>
        <begin position="283"/>
        <end position="320"/>
    </location>
</feature>
<feature type="repeat" description="HEAT 3">
    <location>
        <begin position="321"/>
        <end position="355"/>
    </location>
</feature>
<feature type="repeat" description="HEAT 4">
    <location>
        <begin position="356"/>
        <end position="392"/>
    </location>
</feature>
<feature type="repeat" description="HEAT 5">
    <location>
        <begin position="395"/>
        <end position="430"/>
    </location>
</feature>
<feature type="repeat" description="HEAT 6">
    <location>
        <begin position="467"/>
        <end position="504"/>
    </location>
</feature>
<feature type="region of interest" description="Disordered" evidence="2">
    <location>
        <begin position="1"/>
        <end position="21"/>
    </location>
</feature>
<feature type="compositionally biased region" description="Basic and acidic residues" evidence="2">
    <location>
        <begin position="1"/>
        <end position="11"/>
    </location>
</feature>
<feature type="splice variant" id="VSP_034478" description="In isoform 2." evidence="3">
    <original>CSSP</original>
    <variation>LLVR</variation>
    <location>
        <begin position="296"/>
        <end position="299"/>
    </location>
</feature>
<feature type="splice variant" id="VSP_034479" description="In isoform 2." evidence="3">
    <location>
        <begin position="300"/>
        <end position="873"/>
    </location>
</feature>
<feature type="sequence conflict" description="In Ref. 3; AAH45918." evidence="4" ref="3">
    <original>N</original>
    <variation>D</variation>
    <location>
        <position position="56"/>
    </location>
</feature>
<feature type="sequence conflict" description="In Ref. 3; AAH96860." evidence="4" ref="3">
    <original>I</original>
    <variation>V</variation>
    <location>
        <position position="103"/>
    </location>
</feature>
<feature type="sequence conflict" description="In Ref. 3; AAH96860." evidence="4" ref="3">
    <original>M</original>
    <variation>I</variation>
    <location>
        <position position="576"/>
    </location>
</feature>
<feature type="sequence conflict" description="In Ref. 1; AAF05718." evidence="4" ref="1">
    <original>C</original>
    <variation>F</variation>
    <location>
        <position position="649"/>
    </location>
</feature>
<feature type="sequence conflict" description="In Ref. 1; AAF05717/AAF05718 and 3; AAH96860." evidence="4" ref="1 3">
    <original>I</original>
    <variation>M</variation>
    <location>
        <position position="853"/>
    </location>
</feature>
<sequence length="873" mass="97529">MIKKFDKKDEESGSGSNPFQHLEKSAVLQEARIFNETPINPRRCLHILTKIIYLLNQGEHFGTTEATEAFFAMTRLFQSNDQTLRRMCYLTIKEMANISEDVIIVTSSLTKDMTGKEDVYRGPAIRALCRITDTTMLQAIERYMKQAIVDKVPSVSSSALVSSLHMVKMSFDVVKRWVNEAQEAASSDNIMVQYHALGLLYHLRKNDRLAVTKMLNKFTKSGLKSPFAYCMMIRIASKLLEETEGGHDSPLFDFIESCLRNKHEMVVYEAASAIVHMPNCTARELAPAVSVLQLFCSSPKAALRYAAVRTLNKVAMKHPSAVTACNLDLENLITDSNRSIATLAITTLLKTGSESSVDRLMKQISSFVSEISDEFKVVVVQAISALCQKYPRKHSVMMNFLSNMLRDDGGFEYKRAIVDCIISIIEENPESKETGLAHLCEFIEDCEHTVLATKILHLLGKEGPRTPTPSKYIRFIFNRVVLESEAVRAAAVSALAKFGAQNDDLLPSVLVLMQRCMMDSDDEVRDRATFYMNVLQQKQKALNAAYIFNGLSVSVLGLEKSLHQYTLEPSEKPFDMKTVPLATAPITEHKTEIAPVATSKLPEKLAPSRQDIYQEQLSAIPEFQGLGPLFKSSEPVQLTEAETEYVVRCIKHTFANHMIFQFDCTNTLNDQLLQKVLVQMEPSESYEVLHYVPAANLPYSQPGSCYSLVRLPEDDPTAVSCTFSCTMKYLVRDCDPNTGEPDDDGYDDEYVLEDLEVTVADHIQKVLKPNFAAAWDEVGDECEKEETFALATVRTLDEAVNNIVSFLGMQPCERSDKVPENKNSHVLFLAGVFRGGHDVLVRARLALADGVTIQVTVRSTDDNVVDVILASVG</sequence>
<organism>
    <name type="scientific">Danio rerio</name>
    <name type="common">Zebrafish</name>
    <name type="synonym">Brachydanio rerio</name>
    <dbReference type="NCBI Taxonomy" id="7955"/>
    <lineage>
        <taxon>Eukaryota</taxon>
        <taxon>Metazoa</taxon>
        <taxon>Chordata</taxon>
        <taxon>Craniata</taxon>
        <taxon>Vertebrata</taxon>
        <taxon>Euteleostomi</taxon>
        <taxon>Actinopterygii</taxon>
        <taxon>Neopterygii</taxon>
        <taxon>Teleostei</taxon>
        <taxon>Ostariophysi</taxon>
        <taxon>Cypriniformes</taxon>
        <taxon>Danionidae</taxon>
        <taxon>Danioninae</taxon>
        <taxon>Danio</taxon>
    </lineage>
</organism>
<reference key="1">
    <citation type="journal article" date="2000" name="FEBS Lett.">
        <title>Duplication of genes encoding non-clathrin coat protein gamma-COP in vertebrate, insect and plant evolution.</title>
        <authorList>
            <person name="Hahn Y."/>
            <person name="Lee Y.J."/>
            <person name="Yun J.H."/>
            <person name="Yang S.K."/>
            <person name="Park C.W."/>
            <person name="Mita K."/>
            <person name="Huh T.-L."/>
            <person name="Rhee M."/>
            <person name="Chung J.H."/>
        </authorList>
    </citation>
    <scope>NUCLEOTIDE SEQUENCE [MRNA] (ISOFORM 1)</scope>
</reference>
<reference key="2">
    <citation type="journal article" date="2013" name="Nature">
        <title>The zebrafish reference genome sequence and its relationship to the human genome.</title>
        <authorList>
            <person name="Howe K."/>
            <person name="Clark M.D."/>
            <person name="Torroja C.F."/>
            <person name="Torrance J."/>
            <person name="Berthelot C."/>
            <person name="Muffato M."/>
            <person name="Collins J.E."/>
            <person name="Humphray S."/>
            <person name="McLaren K."/>
            <person name="Matthews L."/>
            <person name="McLaren S."/>
            <person name="Sealy I."/>
            <person name="Caccamo M."/>
            <person name="Churcher C."/>
            <person name="Scott C."/>
            <person name="Barrett J.C."/>
            <person name="Koch R."/>
            <person name="Rauch G.J."/>
            <person name="White S."/>
            <person name="Chow W."/>
            <person name="Kilian B."/>
            <person name="Quintais L.T."/>
            <person name="Guerra-Assuncao J.A."/>
            <person name="Zhou Y."/>
            <person name="Gu Y."/>
            <person name="Yen J."/>
            <person name="Vogel J.H."/>
            <person name="Eyre T."/>
            <person name="Redmond S."/>
            <person name="Banerjee R."/>
            <person name="Chi J."/>
            <person name="Fu B."/>
            <person name="Langley E."/>
            <person name="Maguire S.F."/>
            <person name="Laird G.K."/>
            <person name="Lloyd D."/>
            <person name="Kenyon E."/>
            <person name="Donaldson S."/>
            <person name="Sehra H."/>
            <person name="Almeida-King J."/>
            <person name="Loveland J."/>
            <person name="Trevanion S."/>
            <person name="Jones M."/>
            <person name="Quail M."/>
            <person name="Willey D."/>
            <person name="Hunt A."/>
            <person name="Burton J."/>
            <person name="Sims S."/>
            <person name="McLay K."/>
            <person name="Plumb B."/>
            <person name="Davis J."/>
            <person name="Clee C."/>
            <person name="Oliver K."/>
            <person name="Clark R."/>
            <person name="Riddle C."/>
            <person name="Elliot D."/>
            <person name="Threadgold G."/>
            <person name="Harden G."/>
            <person name="Ware D."/>
            <person name="Begum S."/>
            <person name="Mortimore B."/>
            <person name="Kerry G."/>
            <person name="Heath P."/>
            <person name="Phillimore B."/>
            <person name="Tracey A."/>
            <person name="Corby N."/>
            <person name="Dunn M."/>
            <person name="Johnson C."/>
            <person name="Wood J."/>
            <person name="Clark S."/>
            <person name="Pelan S."/>
            <person name="Griffiths G."/>
            <person name="Smith M."/>
            <person name="Glithero R."/>
            <person name="Howden P."/>
            <person name="Barker N."/>
            <person name="Lloyd C."/>
            <person name="Stevens C."/>
            <person name="Harley J."/>
            <person name="Holt K."/>
            <person name="Panagiotidis G."/>
            <person name="Lovell J."/>
            <person name="Beasley H."/>
            <person name="Henderson C."/>
            <person name="Gordon D."/>
            <person name="Auger K."/>
            <person name="Wright D."/>
            <person name="Collins J."/>
            <person name="Raisen C."/>
            <person name="Dyer L."/>
            <person name="Leung K."/>
            <person name="Robertson L."/>
            <person name="Ambridge K."/>
            <person name="Leongamornlert D."/>
            <person name="McGuire S."/>
            <person name="Gilderthorp R."/>
            <person name="Griffiths C."/>
            <person name="Manthravadi D."/>
            <person name="Nichol S."/>
            <person name="Barker G."/>
            <person name="Whitehead S."/>
            <person name="Kay M."/>
            <person name="Brown J."/>
            <person name="Murnane C."/>
            <person name="Gray E."/>
            <person name="Humphries M."/>
            <person name="Sycamore N."/>
            <person name="Barker D."/>
            <person name="Saunders D."/>
            <person name="Wallis J."/>
            <person name="Babbage A."/>
            <person name="Hammond S."/>
            <person name="Mashreghi-Mohammadi M."/>
            <person name="Barr L."/>
            <person name="Martin S."/>
            <person name="Wray P."/>
            <person name="Ellington A."/>
            <person name="Matthews N."/>
            <person name="Ellwood M."/>
            <person name="Woodmansey R."/>
            <person name="Clark G."/>
            <person name="Cooper J."/>
            <person name="Tromans A."/>
            <person name="Grafham D."/>
            <person name="Skuce C."/>
            <person name="Pandian R."/>
            <person name="Andrews R."/>
            <person name="Harrison E."/>
            <person name="Kimberley A."/>
            <person name="Garnett J."/>
            <person name="Fosker N."/>
            <person name="Hall R."/>
            <person name="Garner P."/>
            <person name="Kelly D."/>
            <person name="Bird C."/>
            <person name="Palmer S."/>
            <person name="Gehring I."/>
            <person name="Berger A."/>
            <person name="Dooley C.M."/>
            <person name="Ersan-Urun Z."/>
            <person name="Eser C."/>
            <person name="Geiger H."/>
            <person name="Geisler M."/>
            <person name="Karotki L."/>
            <person name="Kirn A."/>
            <person name="Konantz J."/>
            <person name="Konantz M."/>
            <person name="Oberlander M."/>
            <person name="Rudolph-Geiger S."/>
            <person name="Teucke M."/>
            <person name="Lanz C."/>
            <person name="Raddatz G."/>
            <person name="Osoegawa K."/>
            <person name="Zhu B."/>
            <person name="Rapp A."/>
            <person name="Widaa S."/>
            <person name="Langford C."/>
            <person name="Yang F."/>
            <person name="Schuster S.C."/>
            <person name="Carter N.P."/>
            <person name="Harrow J."/>
            <person name="Ning Z."/>
            <person name="Herrero J."/>
            <person name="Searle S.M."/>
            <person name="Enright A."/>
            <person name="Geisler R."/>
            <person name="Plasterk R.H."/>
            <person name="Lee C."/>
            <person name="Westerfield M."/>
            <person name="de Jong P.J."/>
            <person name="Zon L.I."/>
            <person name="Postlethwait J.H."/>
            <person name="Nusslein-Volhard C."/>
            <person name="Hubbard T.J."/>
            <person name="Roest Crollius H."/>
            <person name="Rogers J."/>
            <person name="Stemple D.L."/>
        </authorList>
    </citation>
    <scope>NUCLEOTIDE SEQUENCE [LARGE SCALE GENOMIC DNA]</scope>
    <source>
        <strain>Tuebingen</strain>
    </source>
</reference>
<reference key="3">
    <citation type="submission" date="2005-06" db="EMBL/GenBank/DDBJ databases">
        <authorList>
            <consortium name="NIH - Zebrafish Gene Collection (ZGC) project"/>
        </authorList>
    </citation>
    <scope>NUCLEOTIDE SEQUENCE [LARGE SCALE MRNA] (ISOFORMS 1 AND 2)</scope>
    <source>
        <strain>AB</strain>
    </source>
</reference>
<keyword id="KW-0025">Alternative splicing</keyword>
<keyword id="KW-0963">Cytoplasm</keyword>
<keyword id="KW-0968">Cytoplasmic vesicle</keyword>
<keyword id="KW-0931">ER-Golgi transport</keyword>
<keyword id="KW-0333">Golgi apparatus</keyword>
<keyword id="KW-0472">Membrane</keyword>
<keyword id="KW-0653">Protein transport</keyword>
<keyword id="KW-1185">Reference proteome</keyword>
<keyword id="KW-0677">Repeat</keyword>
<keyword id="KW-0813">Transport</keyword>
<proteinExistence type="evidence at transcript level"/>
<comment type="function">
    <text evidence="1">The coatomer is a cytosolic protein complex that binds to dilysine motifs and reversibly associates with Golgi non-clathrin-coated vesicles, which further mediate biosynthetic protein transport from the ER, via the Golgi up to the trans Golgi network. Coatomer complex is required for budding from Golgi membranes, and is essential for the retrograde Golgi-to-ER transport of dilysine-tagged proteins (By similarity).</text>
</comment>
<comment type="subunit">
    <text evidence="1">Oligomeric complex.</text>
</comment>
<comment type="subcellular location">
    <subcellularLocation>
        <location evidence="1">Cytoplasm</location>
    </subcellularLocation>
    <subcellularLocation>
        <location evidence="1">Golgi apparatus membrane</location>
        <topology evidence="1">Peripheral membrane protein</topology>
        <orientation evidence="1">Cytoplasmic side</orientation>
    </subcellularLocation>
    <subcellularLocation>
        <location evidence="1">Cytoplasmic vesicle</location>
        <location evidence="1">COPI-coated vesicle membrane</location>
        <topology evidence="1">Peripheral membrane protein</topology>
        <orientation evidence="1">Cytoplasmic side</orientation>
    </subcellularLocation>
</comment>
<comment type="alternative products">
    <event type="alternative splicing"/>
    <isoform>
        <id>Q9PUE4-1</id>
        <name>1</name>
        <sequence type="displayed"/>
    </isoform>
    <isoform>
        <id>Q9PUE4-2</id>
        <name>2</name>
        <sequence type="described" ref="VSP_034478 VSP_034479"/>
    </isoform>
</comment>
<comment type="similarity">
    <text evidence="4">Belongs to the COPG family.</text>
</comment>
<protein>
    <recommendedName>
        <fullName>Coatomer subunit gamma-2</fullName>
    </recommendedName>
    <alternativeName>
        <fullName>Gamma-2-coat protein</fullName>
        <shortName>Gamma-2-COP</shortName>
    </alternativeName>
</protein>
<accession>Q9PUE4</accession>
<accession>Q1L8N9</accession>
<accession>Q4V9K1</accession>
<accession>Q7ZVC5</accession>
<accession>Q9PUE3</accession>